<evidence type="ECO:0000255" key="1">
    <source>
        <dbReference type="PROSITE-ProRule" id="PRU00541"/>
    </source>
</evidence>
<evidence type="ECO:0000255" key="2">
    <source>
        <dbReference type="PROSITE-ProRule" id="PRU00542"/>
    </source>
</evidence>
<accession>Q914M3</accession>
<dbReference type="EC" id="3.6.4.-"/>
<dbReference type="EMBL" id="AF440571">
    <property type="protein sequence ID" value="AAL27718.1"/>
    <property type="molecule type" value="Genomic_DNA"/>
</dbReference>
<dbReference type="RefSeq" id="NP_445672.1">
    <property type="nucleotide sequence ID" value="NC_003214.2"/>
</dbReference>
<dbReference type="SMR" id="Q914M3"/>
<dbReference type="GeneID" id="922339"/>
<dbReference type="KEGG" id="vg:922339"/>
<dbReference type="Proteomes" id="UP000007017">
    <property type="component" value="Segment"/>
</dbReference>
<dbReference type="GO" id="GO:0005524">
    <property type="term" value="F:ATP binding"/>
    <property type="evidence" value="ECO:0007669"/>
    <property type="project" value="UniProtKB-KW"/>
</dbReference>
<dbReference type="GO" id="GO:0016887">
    <property type="term" value="F:ATP hydrolysis activity"/>
    <property type="evidence" value="ECO:0007669"/>
    <property type="project" value="InterPro"/>
</dbReference>
<dbReference type="GO" id="GO:0004386">
    <property type="term" value="F:helicase activity"/>
    <property type="evidence" value="ECO:0007669"/>
    <property type="project" value="UniProtKB-KW"/>
</dbReference>
<dbReference type="GO" id="GO:0003676">
    <property type="term" value="F:nucleic acid binding"/>
    <property type="evidence" value="ECO:0007669"/>
    <property type="project" value="InterPro"/>
</dbReference>
<dbReference type="CDD" id="cd17921">
    <property type="entry name" value="DEXHc_Ski2"/>
    <property type="match status" value="1"/>
</dbReference>
<dbReference type="Gene3D" id="1.10.3380.30">
    <property type="match status" value="2"/>
</dbReference>
<dbReference type="Gene3D" id="1.10.150.20">
    <property type="entry name" value="5' to 3' exonuclease, C-terminal subdomain"/>
    <property type="match status" value="1"/>
</dbReference>
<dbReference type="Gene3D" id="3.40.50.300">
    <property type="entry name" value="P-loop containing nucleotide triphosphate hydrolases"/>
    <property type="match status" value="2"/>
</dbReference>
<dbReference type="InterPro" id="IPR003593">
    <property type="entry name" value="AAA+_ATPase"/>
</dbReference>
<dbReference type="InterPro" id="IPR011545">
    <property type="entry name" value="DEAD/DEAH_box_helicase_dom"/>
</dbReference>
<dbReference type="InterPro" id="IPR048772">
    <property type="entry name" value="Hel308-like_dom4"/>
</dbReference>
<dbReference type="InterPro" id="IPR050474">
    <property type="entry name" value="Hel308_SKI2-like"/>
</dbReference>
<dbReference type="InterPro" id="IPR014001">
    <property type="entry name" value="Helicase_ATP-bd"/>
</dbReference>
<dbReference type="InterPro" id="IPR001650">
    <property type="entry name" value="Helicase_C-like"/>
</dbReference>
<dbReference type="InterPro" id="IPR027417">
    <property type="entry name" value="P-loop_NTPase"/>
</dbReference>
<dbReference type="PANTHER" id="PTHR47961:SF10">
    <property type="entry name" value="ATP-DEPENDENT DNA HELICASE HEL308"/>
    <property type="match status" value="1"/>
</dbReference>
<dbReference type="PANTHER" id="PTHR47961">
    <property type="entry name" value="DNA POLYMERASE THETA, PUTATIVE (AFU_ORTHOLOGUE AFUA_1G05260)-RELATED"/>
    <property type="match status" value="1"/>
</dbReference>
<dbReference type="Pfam" id="PF00270">
    <property type="entry name" value="DEAD"/>
    <property type="match status" value="1"/>
</dbReference>
<dbReference type="Pfam" id="PF00271">
    <property type="entry name" value="Helicase_C"/>
    <property type="match status" value="1"/>
</dbReference>
<dbReference type="Pfam" id="PF21280">
    <property type="entry name" value="Helicase_dom4_arc"/>
    <property type="match status" value="1"/>
</dbReference>
<dbReference type="SMART" id="SM00382">
    <property type="entry name" value="AAA"/>
    <property type="match status" value="1"/>
</dbReference>
<dbReference type="SMART" id="SM00487">
    <property type="entry name" value="DEXDc"/>
    <property type="match status" value="1"/>
</dbReference>
<dbReference type="SMART" id="SM00490">
    <property type="entry name" value="HELICc"/>
    <property type="match status" value="1"/>
</dbReference>
<dbReference type="SUPFAM" id="SSF52540">
    <property type="entry name" value="P-loop containing nucleoside triphosphate hydrolases"/>
    <property type="match status" value="1"/>
</dbReference>
<dbReference type="SUPFAM" id="SSF158702">
    <property type="entry name" value="Sec63 N-terminal domain-like"/>
    <property type="match status" value="1"/>
</dbReference>
<dbReference type="PROSITE" id="PS51192">
    <property type="entry name" value="HELICASE_ATP_BIND_1"/>
    <property type="match status" value="1"/>
</dbReference>
<dbReference type="PROSITE" id="PS51194">
    <property type="entry name" value="HELICASE_CTER"/>
    <property type="match status" value="1"/>
</dbReference>
<keyword id="KW-0067">ATP-binding</keyword>
<keyword id="KW-0347">Helicase</keyword>
<keyword id="KW-0378">Hydrolase</keyword>
<keyword id="KW-0547">Nucleotide-binding</keyword>
<keyword id="KW-1185">Reference proteome</keyword>
<reference key="1">
    <citation type="journal article" date="2000" name="Virology">
        <title>A novel lipothrixvirus, SIFV, of the extremely thermophilic crenarchaeon Sulfolobus.</title>
        <authorList>
            <person name="Arnold H.P."/>
            <person name="Zillig W."/>
            <person name="Ziese U."/>
            <person name="Holz I."/>
            <person name="Crosby M."/>
            <person name="Utterback T."/>
            <person name="Weidmann J.F."/>
            <person name="Umayam L.A."/>
            <person name="Teffera K."/>
            <person name="Kristjanson J.K."/>
            <person name="Klenk H.P."/>
            <person name="Nelson K.E."/>
            <person name="Fraser C.M."/>
        </authorList>
    </citation>
    <scope>NUCLEOTIDE SEQUENCE [GENOMIC DNA]</scope>
</reference>
<feature type="chain" id="PRO_0000385376" description="Putative helicase 7">
    <location>
        <begin position="1"/>
        <end position="601"/>
    </location>
</feature>
<feature type="domain" description="Helicase ATP-binding" evidence="1">
    <location>
        <begin position="17"/>
        <end position="182"/>
    </location>
</feature>
<feature type="domain" description="Helicase C-terminal" evidence="2">
    <location>
        <begin position="208"/>
        <end position="375"/>
    </location>
</feature>
<feature type="short sequence motif" description="DEAH box">
    <location>
        <begin position="129"/>
        <end position="132"/>
    </location>
</feature>
<feature type="binding site" evidence="1">
    <location>
        <begin position="30"/>
        <end position="37"/>
    </location>
    <ligand>
        <name>ATP</name>
        <dbReference type="ChEBI" id="CHEBI:30616"/>
    </ligand>
</feature>
<organismHost>
    <name type="scientific">Saccharolobus islandicus</name>
    <name type="common">Sulfolobus islandicus</name>
    <dbReference type="NCBI Taxonomy" id="43080"/>
</organismHost>
<protein>
    <recommendedName>
        <fullName>Putative helicase 7</fullName>
        <ecNumber>3.6.4.-</ecNumber>
    </recommendedName>
</protein>
<name>Y007_SIFVH</name>
<gene>
    <name type="primary">SIFV0007</name>
</gene>
<organism>
    <name type="scientific">Sulfolobus islandicus filamentous virus (isolate Iceland/Hveragerdi)</name>
    <name type="common">SIFV</name>
    <dbReference type="NCBI Taxonomy" id="654908"/>
    <lineage>
        <taxon>Viruses</taxon>
        <taxon>Adnaviria</taxon>
        <taxon>Zilligvirae</taxon>
        <taxon>Taleaviricota</taxon>
        <taxon>Tokiviricetes</taxon>
        <taxon>Ligamenvirales</taxon>
        <taxon>Lipothrixviridae</taxon>
        <taxon>Betalipothrixvirus</taxon>
        <taxon>Sulfolobus islandicus filamentous virus</taxon>
    </lineage>
</organism>
<proteinExistence type="predicted"/>
<sequence length="601" mass="68601">MVKMSIQLNEFQKKALQSFLMSDKNLLITAPTGTGKSFLAMLMAMETKSRVVYTVPLRALALQLNDDFHNKVAPLVNGYADSVALTSEVYEEDPENLEERVIFTTYEKADAIFRRHYPWTDRIETLIIDEIHNIGDKERGKAIENLIAYAMNEGIRIVAMSATIPDVNKIAEIIDAEIIKTDERPIPLYKAVKIGNKLYFEDGDVIELKEDFIKKMVRKNKVVMIFTSTRKKAEELYMIYDRKFQNKVAFFHAGLDAETKLRLLEETRQGKYNIIVSTTALSQGVNFPFYAVVFDDLKLPIIEYGRFTGWKQITPIEFDQICGRAGRPGYDEEGLCIIEATDIRQAEKLKRTYFNTSYGTITGHHVLEDFLLALISKYIYAKPDRIMEATKHTISFRNISEELVKEKLEELKNAKLIGEDGTGYFVTLYGRAVAESYFDVKDAITYHDVLTKNNVKEEEIINAILENENVLNASKGENVNIIFNSWIKGVDEKTIVKATKNMTLNDLNKLVQTLSWQTYGVYRITKALGKKELADKLRLLFLEIRYGVPASALALVQLPGIGRKRAIELMRNGIHNKTELCSQKEISKKIIGEKMVKVLCK</sequence>